<sequence>MITRMSELFLRTLRDDPADAEVPSHKLLIRAGYIRPVGPGLYSWLPLGLRVLRNIERVIREEMNAIGGQEILFPALLPRAPYETTNRWTEYGDGVFRLEDRRGNDYLLGPTHEELFTLTVKGEYNSYKDFPLTLYQIQIKYRDEARPRAGILRAREFVMKDSYSFDIDSGGLKAAYHAHREAYQRIFDRLRVRYVIVSAVSGAMGGSASEEFLAESPVGEDTFVRCVESGYAANVEAVVTARPESLPIDGQPDAVVHDTGETPTIATLVAWANEAGLGREVSAADTLKNVLMKIRQPGGEWELLAIGVPGDREIDEKRLAAALDPAEYVFLDDDDFGKYPFLVKGYIGPKALRSNDVRYLLDPRVVDGTSWITGADEPGRHVVGLVAGRDFTADGTIEAAEVREGDPAPDGAGQLVMARGIEIGHIFQLGRKYTDAFTADVLGEDGKPVRLTMGSYGIGVSRLVAVIAEQHHDNLGLRWPAEIAPFGVHLVIANKDAEARAGAIGLAGELDGLGVEVLLDDRQASPGVKFKDAELLGMPWVVVVGRGWADGVVELRDRFGGQTRELTVGDSLATDIAAAISG</sequence>
<organism>
    <name type="scientific">Mycobacterium ulcerans (strain Agy99)</name>
    <dbReference type="NCBI Taxonomy" id="362242"/>
    <lineage>
        <taxon>Bacteria</taxon>
        <taxon>Bacillati</taxon>
        <taxon>Actinomycetota</taxon>
        <taxon>Actinomycetes</taxon>
        <taxon>Mycobacteriales</taxon>
        <taxon>Mycobacteriaceae</taxon>
        <taxon>Mycobacterium</taxon>
        <taxon>Mycobacterium ulcerans group</taxon>
    </lineage>
</organism>
<dbReference type="EC" id="6.1.1.15" evidence="1"/>
<dbReference type="EMBL" id="CP000325">
    <property type="protein sequence ID" value="ABL04537.1"/>
    <property type="molecule type" value="Genomic_DNA"/>
</dbReference>
<dbReference type="RefSeq" id="WP_011740154.1">
    <property type="nucleotide sequence ID" value="NC_008611.1"/>
</dbReference>
<dbReference type="SMR" id="A0PQB8"/>
<dbReference type="KEGG" id="mul:MUL_2116"/>
<dbReference type="eggNOG" id="COG0442">
    <property type="taxonomic scope" value="Bacteria"/>
</dbReference>
<dbReference type="HOGENOM" id="CLU_016739_0_0_11"/>
<dbReference type="Proteomes" id="UP000000765">
    <property type="component" value="Chromosome"/>
</dbReference>
<dbReference type="GO" id="GO:0005829">
    <property type="term" value="C:cytosol"/>
    <property type="evidence" value="ECO:0007669"/>
    <property type="project" value="TreeGrafter"/>
</dbReference>
<dbReference type="GO" id="GO:0002161">
    <property type="term" value="F:aminoacyl-tRNA deacylase activity"/>
    <property type="evidence" value="ECO:0007669"/>
    <property type="project" value="InterPro"/>
</dbReference>
<dbReference type="GO" id="GO:0005524">
    <property type="term" value="F:ATP binding"/>
    <property type="evidence" value="ECO:0007669"/>
    <property type="project" value="UniProtKB-UniRule"/>
</dbReference>
<dbReference type="GO" id="GO:0004827">
    <property type="term" value="F:proline-tRNA ligase activity"/>
    <property type="evidence" value="ECO:0007669"/>
    <property type="project" value="UniProtKB-UniRule"/>
</dbReference>
<dbReference type="GO" id="GO:0006433">
    <property type="term" value="P:prolyl-tRNA aminoacylation"/>
    <property type="evidence" value="ECO:0007669"/>
    <property type="project" value="UniProtKB-UniRule"/>
</dbReference>
<dbReference type="CDD" id="cd00861">
    <property type="entry name" value="ProRS_anticodon_short"/>
    <property type="match status" value="1"/>
</dbReference>
<dbReference type="CDD" id="cd00779">
    <property type="entry name" value="ProRS_core_prok"/>
    <property type="match status" value="1"/>
</dbReference>
<dbReference type="FunFam" id="3.30.930.10:FF:000065">
    <property type="entry name" value="Proline--tRNA ligase"/>
    <property type="match status" value="1"/>
</dbReference>
<dbReference type="FunFam" id="3.30.930.10:FF:000070">
    <property type="entry name" value="Proline--tRNA ligase"/>
    <property type="match status" value="1"/>
</dbReference>
<dbReference type="FunFam" id="3.40.50.800:FF:000024">
    <property type="entry name" value="Proline--tRNA ligase"/>
    <property type="match status" value="1"/>
</dbReference>
<dbReference type="Gene3D" id="3.40.50.800">
    <property type="entry name" value="Anticodon-binding domain"/>
    <property type="match status" value="1"/>
</dbReference>
<dbReference type="Gene3D" id="3.30.930.10">
    <property type="entry name" value="Bira Bifunctional Protein, Domain 2"/>
    <property type="match status" value="2"/>
</dbReference>
<dbReference type="Gene3D" id="3.90.960.10">
    <property type="entry name" value="YbaK/aminoacyl-tRNA synthetase-associated domain"/>
    <property type="match status" value="1"/>
</dbReference>
<dbReference type="HAMAP" id="MF_01569">
    <property type="entry name" value="Pro_tRNA_synth_type1"/>
    <property type="match status" value="1"/>
</dbReference>
<dbReference type="InterPro" id="IPR002314">
    <property type="entry name" value="aa-tRNA-synt_IIb"/>
</dbReference>
<dbReference type="InterPro" id="IPR006195">
    <property type="entry name" value="aa-tRNA-synth_II"/>
</dbReference>
<dbReference type="InterPro" id="IPR045864">
    <property type="entry name" value="aa-tRNA-synth_II/BPL/LPL"/>
</dbReference>
<dbReference type="InterPro" id="IPR004154">
    <property type="entry name" value="Anticodon-bd"/>
</dbReference>
<dbReference type="InterPro" id="IPR036621">
    <property type="entry name" value="Anticodon-bd_dom_sf"/>
</dbReference>
<dbReference type="InterPro" id="IPR002316">
    <property type="entry name" value="Pro-tRNA-ligase_IIa"/>
</dbReference>
<dbReference type="InterPro" id="IPR004500">
    <property type="entry name" value="Pro-tRNA-synth_IIa_bac-type"/>
</dbReference>
<dbReference type="InterPro" id="IPR023717">
    <property type="entry name" value="Pro-tRNA-Synthase_IIa_type1"/>
</dbReference>
<dbReference type="InterPro" id="IPR050062">
    <property type="entry name" value="Pro-tRNA_synthetase"/>
</dbReference>
<dbReference type="InterPro" id="IPR044140">
    <property type="entry name" value="ProRS_anticodon_short"/>
</dbReference>
<dbReference type="InterPro" id="IPR033730">
    <property type="entry name" value="ProRS_core_prok"/>
</dbReference>
<dbReference type="InterPro" id="IPR036754">
    <property type="entry name" value="YbaK/aa-tRNA-synt-asso_dom_sf"/>
</dbReference>
<dbReference type="InterPro" id="IPR007214">
    <property type="entry name" value="YbaK/aa-tRNA-synth-assoc-dom"/>
</dbReference>
<dbReference type="NCBIfam" id="NF006625">
    <property type="entry name" value="PRK09194.1"/>
    <property type="match status" value="1"/>
</dbReference>
<dbReference type="NCBIfam" id="TIGR00409">
    <property type="entry name" value="proS_fam_II"/>
    <property type="match status" value="1"/>
</dbReference>
<dbReference type="PANTHER" id="PTHR42753">
    <property type="entry name" value="MITOCHONDRIAL RIBOSOME PROTEIN L39/PROLYL-TRNA LIGASE FAMILY MEMBER"/>
    <property type="match status" value="1"/>
</dbReference>
<dbReference type="PANTHER" id="PTHR42753:SF2">
    <property type="entry name" value="PROLINE--TRNA LIGASE"/>
    <property type="match status" value="1"/>
</dbReference>
<dbReference type="Pfam" id="PF03129">
    <property type="entry name" value="HGTP_anticodon"/>
    <property type="match status" value="1"/>
</dbReference>
<dbReference type="Pfam" id="PF00587">
    <property type="entry name" value="tRNA-synt_2b"/>
    <property type="match status" value="1"/>
</dbReference>
<dbReference type="Pfam" id="PF04073">
    <property type="entry name" value="tRNA_edit"/>
    <property type="match status" value="1"/>
</dbReference>
<dbReference type="PRINTS" id="PR01046">
    <property type="entry name" value="TRNASYNTHPRO"/>
</dbReference>
<dbReference type="SUPFAM" id="SSF52954">
    <property type="entry name" value="Class II aaRS ABD-related"/>
    <property type="match status" value="1"/>
</dbReference>
<dbReference type="SUPFAM" id="SSF55681">
    <property type="entry name" value="Class II aaRS and biotin synthetases"/>
    <property type="match status" value="1"/>
</dbReference>
<dbReference type="SUPFAM" id="SSF55826">
    <property type="entry name" value="YbaK/ProRS associated domain"/>
    <property type="match status" value="1"/>
</dbReference>
<dbReference type="PROSITE" id="PS50862">
    <property type="entry name" value="AA_TRNA_LIGASE_II"/>
    <property type="match status" value="1"/>
</dbReference>
<gene>
    <name evidence="1" type="primary">proS</name>
    <name type="ordered locus">MUL_2116</name>
</gene>
<comment type="function">
    <text evidence="1">Catalyzes the attachment of proline to tRNA(Pro) in a two-step reaction: proline is first activated by ATP to form Pro-AMP and then transferred to the acceptor end of tRNA(Pro). As ProRS can inadvertently accommodate and process non-cognate amino acids such as alanine and cysteine, to avoid such errors it has two additional distinct editing activities against alanine. One activity is designated as 'pretransfer' editing and involves the tRNA(Pro)-independent hydrolysis of activated Ala-AMP. The other activity is designated 'posttransfer' editing and involves deacylation of mischarged Ala-tRNA(Pro). The misacylated Cys-tRNA(Pro) is not edited by ProRS.</text>
</comment>
<comment type="catalytic activity">
    <reaction evidence="1">
        <text>tRNA(Pro) + L-proline + ATP = L-prolyl-tRNA(Pro) + AMP + diphosphate</text>
        <dbReference type="Rhea" id="RHEA:14305"/>
        <dbReference type="Rhea" id="RHEA-COMP:9700"/>
        <dbReference type="Rhea" id="RHEA-COMP:9702"/>
        <dbReference type="ChEBI" id="CHEBI:30616"/>
        <dbReference type="ChEBI" id="CHEBI:33019"/>
        <dbReference type="ChEBI" id="CHEBI:60039"/>
        <dbReference type="ChEBI" id="CHEBI:78442"/>
        <dbReference type="ChEBI" id="CHEBI:78532"/>
        <dbReference type="ChEBI" id="CHEBI:456215"/>
        <dbReference type="EC" id="6.1.1.15"/>
    </reaction>
</comment>
<comment type="subunit">
    <text evidence="1">Homodimer.</text>
</comment>
<comment type="subcellular location">
    <subcellularLocation>
        <location evidence="1">Cytoplasm</location>
    </subcellularLocation>
</comment>
<comment type="domain">
    <text evidence="1">Consists of three domains: the N-terminal catalytic domain, the editing domain and the C-terminal anticodon-binding domain.</text>
</comment>
<comment type="similarity">
    <text evidence="1">Belongs to the class-II aminoacyl-tRNA synthetase family. ProS type 1 subfamily.</text>
</comment>
<name>SYP_MYCUA</name>
<protein>
    <recommendedName>
        <fullName evidence="1">Proline--tRNA ligase</fullName>
        <ecNumber evidence="1">6.1.1.15</ecNumber>
    </recommendedName>
    <alternativeName>
        <fullName evidence="1">Prolyl-tRNA synthetase</fullName>
        <shortName evidence="1">ProRS</shortName>
    </alternativeName>
</protein>
<evidence type="ECO:0000255" key="1">
    <source>
        <dbReference type="HAMAP-Rule" id="MF_01569"/>
    </source>
</evidence>
<accession>A0PQB8</accession>
<keyword id="KW-0030">Aminoacyl-tRNA synthetase</keyword>
<keyword id="KW-0067">ATP-binding</keyword>
<keyword id="KW-0963">Cytoplasm</keyword>
<keyword id="KW-0436">Ligase</keyword>
<keyword id="KW-0547">Nucleotide-binding</keyword>
<keyword id="KW-0648">Protein biosynthesis</keyword>
<feature type="chain" id="PRO_0000288353" description="Proline--tRNA ligase">
    <location>
        <begin position="1"/>
        <end position="582"/>
    </location>
</feature>
<reference key="1">
    <citation type="journal article" date="2007" name="Genome Res.">
        <title>Reductive evolution and niche adaptation inferred from the genome of Mycobacterium ulcerans, the causative agent of Buruli ulcer.</title>
        <authorList>
            <person name="Stinear T.P."/>
            <person name="Seemann T."/>
            <person name="Pidot S."/>
            <person name="Frigui W."/>
            <person name="Reysset G."/>
            <person name="Garnier T."/>
            <person name="Meurice G."/>
            <person name="Simon D."/>
            <person name="Bouchier C."/>
            <person name="Ma L."/>
            <person name="Tichit M."/>
            <person name="Porter J.L."/>
            <person name="Ryan J."/>
            <person name="Johnson P.D.R."/>
            <person name="Davies J.K."/>
            <person name="Jenkin G.A."/>
            <person name="Small P.L.C."/>
            <person name="Jones L.M."/>
            <person name="Tekaia F."/>
            <person name="Laval F."/>
            <person name="Daffe M."/>
            <person name="Parkhill J."/>
            <person name="Cole S.T."/>
        </authorList>
    </citation>
    <scope>NUCLEOTIDE SEQUENCE [LARGE SCALE GENOMIC DNA]</scope>
    <source>
        <strain>Agy99</strain>
    </source>
</reference>
<proteinExistence type="inferred from homology"/>